<protein>
    <recommendedName>
        <fullName>DNA polymerase subunit gamma-1</fullName>
        <ecNumber evidence="1">2.7.7.7</ecNumber>
    </recommendedName>
    <alternativeName>
        <fullName>3'-5' exodeoxyribonuclease</fullName>
        <ecNumber evidence="1">3.1.11.-</ecNumber>
    </alternativeName>
    <alternativeName>
        <fullName>5'-deoxyribose-phosphate lyase</fullName>
        <ecNumber evidence="1">4.2.99.-</ecNumber>
    </alternativeName>
    <alternativeName>
        <fullName>Mitochondrial DNA polymerase catalytic subunit</fullName>
    </alternativeName>
    <alternativeName>
        <fullName>PolG-alpha</fullName>
    </alternativeName>
</protein>
<dbReference type="EC" id="2.7.7.7" evidence="1"/>
<dbReference type="EC" id="3.1.11.-" evidence="1"/>
<dbReference type="EC" id="4.2.99.-" evidence="1"/>
<dbReference type="EMBL" id="AJ245646">
    <property type="protein sequence ID" value="CAB56206.1"/>
    <property type="molecule type" value="mRNA"/>
</dbReference>
<dbReference type="EMBL" id="AJ245647">
    <property type="protein sequence ID" value="CAB56207.1"/>
    <property type="molecule type" value="mRNA"/>
</dbReference>
<dbReference type="RefSeq" id="NP_445980.2">
    <property type="nucleotide sequence ID" value="NM_053528.2"/>
</dbReference>
<dbReference type="RefSeq" id="XP_006229472.1">
    <property type="nucleotide sequence ID" value="XM_006229410.3"/>
</dbReference>
<dbReference type="RefSeq" id="XP_063131999.1">
    <property type="nucleotide sequence ID" value="XM_063275929.1"/>
</dbReference>
<dbReference type="SMR" id="Q9QYV8"/>
<dbReference type="FunCoup" id="Q9QYV8">
    <property type="interactions" value="904"/>
</dbReference>
<dbReference type="STRING" id="10116.ENSRNOP00000047900"/>
<dbReference type="PhosphoSitePlus" id="Q9QYV8"/>
<dbReference type="PaxDb" id="10116-ENSRNOP00000047900"/>
<dbReference type="GeneID" id="85472"/>
<dbReference type="KEGG" id="rno:85472"/>
<dbReference type="UCSC" id="RGD:620057">
    <property type="organism name" value="rat"/>
</dbReference>
<dbReference type="AGR" id="RGD:620057"/>
<dbReference type="CTD" id="5428"/>
<dbReference type="RGD" id="620057">
    <property type="gene designation" value="Polg"/>
</dbReference>
<dbReference type="VEuPathDB" id="HostDB:ENSRNOG00000032293"/>
<dbReference type="eggNOG" id="KOG3657">
    <property type="taxonomic scope" value="Eukaryota"/>
</dbReference>
<dbReference type="HOGENOM" id="CLU_001524_2_2_1"/>
<dbReference type="InParanoid" id="Q9QYV8"/>
<dbReference type="OrthoDB" id="5588663at2759"/>
<dbReference type="PhylomeDB" id="Q9QYV8"/>
<dbReference type="Reactome" id="R-RNO-9913635">
    <property type="pathway name" value="Strand-asynchronous mitochondrial DNA replication"/>
</dbReference>
<dbReference type="PRO" id="PR:Q9QYV8"/>
<dbReference type="Proteomes" id="UP000002494">
    <property type="component" value="Chromosome 1"/>
</dbReference>
<dbReference type="Bgee" id="ENSRNOG00000032293">
    <property type="expression patterns" value="Expressed in liver and 19 other cell types or tissues"/>
</dbReference>
<dbReference type="GO" id="GO:0005760">
    <property type="term" value="C:gamma DNA polymerase complex"/>
    <property type="evidence" value="ECO:0000314"/>
    <property type="project" value="RGD"/>
</dbReference>
<dbReference type="GO" id="GO:0000262">
    <property type="term" value="C:mitochondrial chromosome"/>
    <property type="evidence" value="ECO:0000266"/>
    <property type="project" value="RGD"/>
</dbReference>
<dbReference type="GO" id="GO:0005759">
    <property type="term" value="C:mitochondrial matrix"/>
    <property type="evidence" value="ECO:0000266"/>
    <property type="project" value="RGD"/>
</dbReference>
<dbReference type="GO" id="GO:0042645">
    <property type="term" value="C:mitochondrial nucleoid"/>
    <property type="evidence" value="ECO:0000250"/>
    <property type="project" value="UniProtKB"/>
</dbReference>
<dbReference type="GO" id="GO:0005739">
    <property type="term" value="C:mitochondrion"/>
    <property type="evidence" value="ECO:0000318"/>
    <property type="project" value="GO_Central"/>
</dbReference>
<dbReference type="GO" id="GO:0032991">
    <property type="term" value="C:protein-containing complex"/>
    <property type="evidence" value="ECO:0000266"/>
    <property type="project" value="RGD"/>
</dbReference>
<dbReference type="GO" id="GO:0043195">
    <property type="term" value="C:terminal bouton"/>
    <property type="evidence" value="ECO:0000314"/>
    <property type="project" value="RGD"/>
</dbReference>
<dbReference type="GO" id="GO:0008408">
    <property type="term" value="F:3'-5' exonuclease activity"/>
    <property type="evidence" value="ECO:0000266"/>
    <property type="project" value="RGD"/>
</dbReference>
<dbReference type="GO" id="GO:0051575">
    <property type="term" value="F:5'-deoxyribose-5-phosphate lyase activity"/>
    <property type="evidence" value="ECO:0000250"/>
    <property type="project" value="UniProtKB"/>
</dbReference>
<dbReference type="GO" id="GO:0003682">
    <property type="term" value="F:chromatin binding"/>
    <property type="evidence" value="ECO:0000250"/>
    <property type="project" value="UniProtKB"/>
</dbReference>
<dbReference type="GO" id="GO:0003677">
    <property type="term" value="F:DNA binding"/>
    <property type="evidence" value="ECO:0000266"/>
    <property type="project" value="RGD"/>
</dbReference>
<dbReference type="GO" id="GO:0003887">
    <property type="term" value="F:DNA-directed DNA polymerase activity"/>
    <property type="evidence" value="ECO:0000314"/>
    <property type="project" value="RGD"/>
</dbReference>
<dbReference type="GO" id="GO:0004527">
    <property type="term" value="F:exonuclease activity"/>
    <property type="evidence" value="ECO:0000266"/>
    <property type="project" value="RGD"/>
</dbReference>
<dbReference type="GO" id="GO:0046872">
    <property type="term" value="F:metal ion binding"/>
    <property type="evidence" value="ECO:0007669"/>
    <property type="project" value="UniProtKB-KW"/>
</dbReference>
<dbReference type="GO" id="GO:0002020">
    <property type="term" value="F:protease binding"/>
    <property type="evidence" value="ECO:0000266"/>
    <property type="project" value="RGD"/>
</dbReference>
<dbReference type="GO" id="GO:0008310">
    <property type="term" value="F:single-stranded DNA 3'-5' DNA exonuclease activity"/>
    <property type="evidence" value="ECO:0000250"/>
    <property type="project" value="UniProtKB"/>
</dbReference>
<dbReference type="GO" id="GO:0006284">
    <property type="term" value="P:base-excision repair"/>
    <property type="evidence" value="ECO:0000250"/>
    <property type="project" value="UniProtKB"/>
</dbReference>
<dbReference type="GO" id="GO:0006287">
    <property type="term" value="P:base-excision repair, gap-filling"/>
    <property type="evidence" value="ECO:0000266"/>
    <property type="project" value="RGD"/>
</dbReference>
<dbReference type="GO" id="GO:0071333">
    <property type="term" value="P:cellular response to glucose stimulus"/>
    <property type="evidence" value="ECO:0000270"/>
    <property type="project" value="RGD"/>
</dbReference>
<dbReference type="GO" id="GO:0008340">
    <property type="term" value="P:determination of adult lifespan"/>
    <property type="evidence" value="ECO:0000266"/>
    <property type="project" value="RGD"/>
</dbReference>
<dbReference type="GO" id="GO:0045004">
    <property type="term" value="P:DNA replication proofreading"/>
    <property type="evidence" value="ECO:0000250"/>
    <property type="project" value="UniProtKB"/>
</dbReference>
<dbReference type="GO" id="GO:0006261">
    <property type="term" value="P:DNA-templated DNA replication"/>
    <property type="evidence" value="ECO:0000266"/>
    <property type="project" value="RGD"/>
</dbReference>
<dbReference type="GO" id="GO:0006264">
    <property type="term" value="P:mitochondrial DNA replication"/>
    <property type="evidence" value="ECO:0000266"/>
    <property type="project" value="RGD"/>
</dbReference>
<dbReference type="GO" id="GO:0010332">
    <property type="term" value="P:response to gamma radiation"/>
    <property type="evidence" value="ECO:0000270"/>
    <property type="project" value="RGD"/>
</dbReference>
<dbReference type="GO" id="GO:0055093">
    <property type="term" value="P:response to hyperoxia"/>
    <property type="evidence" value="ECO:0000270"/>
    <property type="project" value="RGD"/>
</dbReference>
<dbReference type="GO" id="GO:0009416">
    <property type="term" value="P:response to light stimulus"/>
    <property type="evidence" value="ECO:0000270"/>
    <property type="project" value="RGD"/>
</dbReference>
<dbReference type="CDD" id="cd08641">
    <property type="entry name" value="DNA_pol_gammaA"/>
    <property type="match status" value="1"/>
</dbReference>
<dbReference type="FunFam" id="1.10.150.20:FF:000024">
    <property type="entry name" value="DNA polymerase gamma, catalytic subunit"/>
    <property type="match status" value="1"/>
</dbReference>
<dbReference type="FunFam" id="3.30.420.390:FF:000001">
    <property type="entry name" value="DNA polymerase gamma, catalytic subunit"/>
    <property type="match status" value="1"/>
</dbReference>
<dbReference type="FunFam" id="3.30.420.390:FF:000002">
    <property type="entry name" value="DNA polymerase gamma, catalytic subunit"/>
    <property type="match status" value="1"/>
</dbReference>
<dbReference type="Gene3D" id="1.20.5.3960">
    <property type="match status" value="1"/>
</dbReference>
<dbReference type="Gene3D" id="3.30.420.390">
    <property type="match status" value="2"/>
</dbReference>
<dbReference type="Gene3D" id="3.30.70.370">
    <property type="match status" value="1"/>
</dbReference>
<dbReference type="Gene3D" id="1.10.150.20">
    <property type="entry name" value="5' to 3' exonuclease, C-terminal subdomain"/>
    <property type="match status" value="1"/>
</dbReference>
<dbReference type="InterPro" id="IPR019760">
    <property type="entry name" value="DNA-dir_DNA_pol_A_CS"/>
</dbReference>
<dbReference type="InterPro" id="IPR002297">
    <property type="entry name" value="DNA-dir_DNA_pol_A_mt"/>
</dbReference>
<dbReference type="InterPro" id="IPR001098">
    <property type="entry name" value="DNA-dir_DNA_pol_A_palm_dom"/>
</dbReference>
<dbReference type="InterPro" id="IPR043502">
    <property type="entry name" value="DNA/RNA_pol_sf"/>
</dbReference>
<dbReference type="InterPro" id="IPR041336">
    <property type="entry name" value="DNApol_Exo"/>
</dbReference>
<dbReference type="InterPro" id="IPR047580">
    <property type="entry name" value="POLG_palm_dom"/>
</dbReference>
<dbReference type="InterPro" id="IPR012337">
    <property type="entry name" value="RNaseH-like_sf"/>
</dbReference>
<dbReference type="PANTHER" id="PTHR10267">
    <property type="entry name" value="DNA POLYMERASE SUBUNIT GAMMA-1"/>
    <property type="match status" value="1"/>
</dbReference>
<dbReference type="PANTHER" id="PTHR10267:SF0">
    <property type="entry name" value="DNA POLYMERASE SUBUNIT GAMMA-1"/>
    <property type="match status" value="1"/>
</dbReference>
<dbReference type="Pfam" id="PF18136">
    <property type="entry name" value="DNApol_Exo"/>
    <property type="match status" value="1"/>
</dbReference>
<dbReference type="PIRSF" id="PIRSF000797">
    <property type="entry name" value="DNA_pol_mt"/>
    <property type="match status" value="1"/>
</dbReference>
<dbReference type="PRINTS" id="PR00867">
    <property type="entry name" value="DNAPOLG"/>
</dbReference>
<dbReference type="SMART" id="SM00482">
    <property type="entry name" value="POLAc"/>
    <property type="match status" value="1"/>
</dbReference>
<dbReference type="SUPFAM" id="SSF56672">
    <property type="entry name" value="DNA/RNA polymerases"/>
    <property type="match status" value="1"/>
</dbReference>
<dbReference type="SUPFAM" id="SSF53098">
    <property type="entry name" value="Ribonuclease H-like"/>
    <property type="match status" value="1"/>
</dbReference>
<dbReference type="PROSITE" id="PS00447">
    <property type="entry name" value="DNA_POLYMERASE_A"/>
    <property type="match status" value="1"/>
</dbReference>
<evidence type="ECO:0000250" key="1">
    <source>
        <dbReference type="UniProtKB" id="P54098"/>
    </source>
</evidence>
<evidence type="ECO:0000256" key="2">
    <source>
        <dbReference type="SAM" id="MobiDB-lite"/>
    </source>
</evidence>
<evidence type="ECO:0000269" key="3">
    <source ref="1"/>
</evidence>
<evidence type="ECO:0000305" key="4"/>
<evidence type="ECO:0000312" key="5">
    <source>
        <dbReference type="RGD" id="620057"/>
    </source>
</evidence>
<comment type="function">
    <text evidence="1">Catalytic subunit of DNA polymerase gamma solely responsible for replication of mitochondrial DNA (mtDNA). Replicates both heavy and light strands of the circular mtDNA genome using a single-stranded DNA template, RNA primers and the four deoxyribonucleoside triphosphates as substrates (By similarity). Has 5' -&gt; 3' polymerase activity. Functionally interacts with TWNK and SSBP1 at the replication fork to form a highly processive replisome, where TWNK unwinds the double-stranded DNA template prior to replication and SSBP1 covers the parental heavy strand to enable continuous replication of the entire mitochondrial genome. A single nucleotide incorporation cycle includes binding of the incoming nucleotide at the insertion site, a phosphodiester bond formation reaction that extends the 3'-end of the primer DNA, and translocation of the primer terminus to the post-insertion site. After completing replication of a mtDNA strand, mediates 3' -&gt; 5' exonucleolytic degradation at the nick to enable proper ligation (By similarity). Highly accurate due to high nucleotide selectivity and 3' -&gt; 5' exonucleolytic proofreading. Proficiently corrects base substitutions, single-base additions and deletions in non-repetitive sequences and short repeats, but displays lower proofreading activity when replicating longer homopolymeric stretches. Exerts exonuclease activity toward single-stranded DNA and double-stranded DNA containing 3'-terminal mispairs. When a misincorporation occurs, transitions from replication to a pro-nucleolytic editing mode and removes the missincorporated nucleoside in the exonuclease active site. Proceeds via an SN2 nucleolytic mechanism in which Asp-198 catalyzes phosphodiester bond hydrolysis and Glu-200 stabilizes the leaving group. As a result the primer strand becomes one nucleotide shorter and is positioned in the post-insertion site, ready to resume DNA synthesis (By similarity). Exerts 5'-deoxyribose phosphate (dRP) lyase activity and mediates repair-associated mtDNA synthesis (gap filling) in base-excision repair pathway. Catalyzes the release of the 5'-terminal 2-deoxyribose-5-phosphate sugar moiety from incised apurinic/apyrimidinic (AP) sites to produce a substrate for DNA ligase. The dRP lyase reaction does not require divalent metal ions and likely proceeds via a Schiff base intermediate in a beta-elimination reaction mechanism (By similarity).</text>
</comment>
<comment type="catalytic activity">
    <reaction evidence="1">
        <text>DNA(n) + a 2'-deoxyribonucleoside 5'-triphosphate = DNA(n+1) + diphosphate</text>
        <dbReference type="Rhea" id="RHEA:22508"/>
        <dbReference type="Rhea" id="RHEA-COMP:17339"/>
        <dbReference type="Rhea" id="RHEA-COMP:17340"/>
        <dbReference type="ChEBI" id="CHEBI:33019"/>
        <dbReference type="ChEBI" id="CHEBI:61560"/>
        <dbReference type="ChEBI" id="CHEBI:173112"/>
        <dbReference type="EC" id="2.7.7.7"/>
    </reaction>
    <physiologicalReaction direction="left-to-right" evidence="1">
        <dbReference type="Rhea" id="RHEA:22509"/>
    </physiologicalReaction>
</comment>
<comment type="catalytic activity">
    <reaction evidence="1">
        <text>a 3'-end 2'-deoxyribonucleotidyl-deoxyribonucleotide-DNA + H2O = a 3'-end 2'-deoxyribonucleotide-DNA + a 2'-deoxyribonucleoside 5'-phosphate + H(+)</text>
        <dbReference type="Rhea" id="RHEA:77911"/>
        <dbReference type="Rhea" id="RHEA-COMP:13863"/>
        <dbReference type="Rhea" id="RHEA-COMP:19009"/>
        <dbReference type="ChEBI" id="CHEBI:15377"/>
        <dbReference type="ChEBI" id="CHEBI:15378"/>
        <dbReference type="ChEBI" id="CHEBI:65317"/>
        <dbReference type="ChEBI" id="CHEBI:138148"/>
        <dbReference type="ChEBI" id="CHEBI:228185"/>
    </reaction>
    <physiologicalReaction direction="left-to-right" evidence="1">
        <dbReference type="Rhea" id="RHEA:77912"/>
    </physiologicalReaction>
</comment>
<comment type="catalytic activity">
    <reaction evidence="1">
        <text>a 5'-end 2'-deoxyribose-2'-deoxyribonucleotide-DNA = (2E,4S)-4-hydroxypenten-2-al-5-phosphate + a 5'-end 5'-phospho-2'-deoxyribonucleoside-DNA + H(+)</text>
        <dbReference type="Rhea" id="RHEA:76255"/>
        <dbReference type="Rhea" id="RHEA-COMP:13180"/>
        <dbReference type="Rhea" id="RHEA-COMP:18657"/>
        <dbReference type="ChEBI" id="CHEBI:15378"/>
        <dbReference type="ChEBI" id="CHEBI:136412"/>
        <dbReference type="ChEBI" id="CHEBI:195194"/>
        <dbReference type="ChEBI" id="CHEBI:195195"/>
    </reaction>
    <physiologicalReaction direction="left-to-right" evidence="1">
        <dbReference type="Rhea" id="RHEA:76256"/>
    </physiologicalReaction>
</comment>
<comment type="cofactor">
    <cofactor evidence="1">
        <name>Mg(2+)</name>
        <dbReference type="ChEBI" id="CHEBI:18420"/>
    </cofactor>
</comment>
<comment type="activity regulation">
    <text evidence="1">Inhibited by dideoxynucleotides such as antiviral agent zalcitabine.</text>
</comment>
<comment type="subunit">
    <text evidence="1">Heterotrimer composed of a catalytic subunit and a homodimer of accessory subunits (POLG:POLG2). Interacts with TTC3. Interacts with LIG3.</text>
</comment>
<comment type="subcellular location">
    <subcellularLocation>
        <location evidence="1">Mitochondrion</location>
    </subcellularLocation>
    <subcellularLocation>
        <location evidence="1">Mitochondrion matrix</location>
        <location evidence="1">Mitochondrion nucleoid</location>
    </subcellularLocation>
</comment>
<comment type="domain">
    <text evidence="1">The polymerase domain encompasses three conserved active site motifs: Pol A (residues 864-873), Pol B (residues 920-935) and Pol C (residues 1111-1118). Binds the incoming dNTPs and undergoes an open to close coformation change to catalyze the formation of phosphodiester bond.</text>
</comment>
<comment type="domain">
    <text evidence="1">The 3' -&gt; 5' exonuclease domain comprises three conserved active site motifs: Exo I (residues 179-183), Exo II (residues 250-258) and Exo III (residues 377-385). Proofreads the newly synthesized DNA strand.</text>
</comment>
<comment type="domain">
    <text evidence="1">The trigger loop contracts to enable correctly matched primer-template pair entry into the polymerase domain and extends to preclude the mismatched one.</text>
</comment>
<comment type="domain">
    <text evidence="1">The accessory determinant domain (AID) interacts with POLG2 proximal monomer.</text>
</comment>
<comment type="similarity">
    <text evidence="4">Belongs to the DNA polymerase type-A family.</text>
</comment>
<accession>Q9QYV8</accession>
<accession>Q9QYV7</accession>
<keyword id="KW-0235">DNA replication</keyword>
<keyword id="KW-0238">DNA-binding</keyword>
<keyword id="KW-0239">DNA-directed DNA polymerase</keyword>
<keyword id="KW-0378">Hydrolase</keyword>
<keyword id="KW-0456">Lyase</keyword>
<keyword id="KW-0460">Magnesium</keyword>
<keyword id="KW-0479">Metal-binding</keyword>
<keyword id="KW-0496">Mitochondrion</keyword>
<keyword id="KW-1135">Mitochondrion nucleoid</keyword>
<keyword id="KW-0548">Nucleotidyltransferase</keyword>
<keyword id="KW-1185">Reference proteome</keyword>
<keyword id="KW-0808">Transferase</keyword>
<sequence length="1216" mass="136856">MSRLLWKKVAGAKVASGPVPATGRWVSSSVLDPVPSDGQPQSQMPSSENGQLRLNPLHIQMLSRGLHEQIFGCGGDVPDEAAVQRSIEHLRKHGLWGQPTTPLPDVQLRLPRLFGGNLDQHFRLLAQKQSLPYLEAAASLSEAQLPPQPRKWVWAEGWTRYGPEGEAEPVAIPEERALVFDVEVCLAEGTCPTLAVAISPSAWYSWCSRRLVEERYSWTSQLSPADLIPLGVSASASSSTQQDWQEQLVVGHNVSFDRAHIREQYLIQGSRMRFLDTMSMHMAISGLSSFQRSLWMGAKQGKHKTQHPTKRGQKSQKNANGPAISSWDWMDISSANNLADVHNLYVGGPRLAKEPRELFVKGSMRDIRENFQDLMEYCARDVWATFEVFQQQLPLFLERCPHPVTLAGMLEMGVSYLPVNQNWERYLTEAQSTYEELQREMKKSLMELANDACQLLSGERYKEDPWLWDLEWDLQEFKQKKAKKVKKTASASKLPIEGAGPFGDPMDQEDPGPPSEEEELQQNIMAHTRLQQLKSTTDLLPKRPQHLPGHPGWYRKLCPRLDDPAWTPGPSLLSLQMRVTPKLMALTWDGFPLHYSDSHGWGYLVPGRRDNLTELPVSPTEESAAVTCPYRAIESLYRRHCLDQGKQQLETQETDLAEEFLLTDSAMWQTVEELGCLDVEAEATVESSGLSQPLVPPTACAPKTSQPTYHHGNGPYNDVDIPGCWFFKLPHKDGNNYNVGSPFAKDFLPKMEDGTLQAGPGGARGPRALEINKMISFWRNAHKRISSQMVVWLPRSALPRAVTRHPSFDEESHYGAILPQVVTAGTITRRAVEPTWLTASNARPDRVGSELKAMVQAPPGYVLVGADVDSQELWIAAVLGDAHFAGMHGCTAFGWMTLQGRKSRGTDLHSKTAATVGISREHAKVFNYGRIYGAGQSFAERLLMQFNHRLSRQEAADKAQQMYAVTKGLRRYRLSDDGEWLVKQLNVPVDRTEDGWVSLQDLRKIRREASRKSRWKKWEVVTERAWTGGTESEMFNKLESIAMSDTPRTPVLGCCISRALEPSVVQGEFMTSRVNWVVQSSAVDYLHLMLVAMKWLFEEFAIDGRFCISIHDEVRYLVREEDRYRAALALQITNLLTRCMFAYKLGLNDLPQSVAFFSAVDIDQCLRKEVTMDCKTPSNPTGMERKYGIPQGEALDIYQIIELTKGSLEKRSQPGP</sequence>
<gene>
    <name evidence="5" type="primary">Polg</name>
    <name type="synonym">Mip1</name>
    <name type="synonym">Polg1</name>
</gene>
<reference key="1">
    <citation type="submission" date="1999-08" db="EMBL/GenBank/DDBJ databases">
        <title>Mitochondrial DNA polymerase gamma from Novikoff hepatoma cells differs from that of normal rat liver in cDNA sequence and kinetic properties.</title>
        <authorList>
            <person name="Sun Q."/>
            <person name="Popanda O."/>
            <person name="Thielmann H.W."/>
        </authorList>
    </citation>
    <scope>NUCLEOTIDE SEQUENCE [MRNA]</scope>
    <scope>VARIANT HIS-273</scope>
    <source>
        <strain>Sprague-Dawley</strain>
        <tissue>Liver</tissue>
    </source>
</reference>
<name>DPOG1_RAT</name>
<proteinExistence type="evidence at transcript level"/>
<feature type="chain" id="PRO_0000101272" description="DNA polymerase subunit gamma-1">
    <location>
        <begin position="1"/>
        <end position="1216"/>
    </location>
</feature>
<feature type="region of interest" description="Disordered" evidence="2">
    <location>
        <begin position="27"/>
        <end position="50"/>
    </location>
</feature>
<feature type="region of interest" description="Disordered" evidence="2">
    <location>
        <begin position="301"/>
        <end position="321"/>
    </location>
</feature>
<feature type="region of interest" description="Disordered" evidence="2">
    <location>
        <begin position="488"/>
        <end position="518"/>
    </location>
</feature>
<feature type="region of interest" description="Accessory-interacting determinant" evidence="1">
    <location>
        <begin position="491"/>
        <end position="552"/>
    </location>
</feature>
<feature type="region of interest" description="Trigger loop" evidence="1">
    <location>
        <begin position="835"/>
        <end position="841"/>
    </location>
</feature>
<feature type="short sequence motif" description="Exo I" evidence="1">
    <location>
        <begin position="179"/>
        <end position="183"/>
    </location>
</feature>
<feature type="short sequence motif" description="Exo II" evidence="1">
    <location>
        <begin position="250"/>
        <end position="258"/>
    </location>
</feature>
<feature type="short sequence motif" description="Exo III" evidence="1">
    <location>
        <begin position="377"/>
        <end position="385"/>
    </location>
</feature>
<feature type="short sequence motif" description="Pol A" evidence="1">
    <location>
        <begin position="864"/>
        <end position="873"/>
    </location>
</feature>
<feature type="short sequence motif" description="Pol B" evidence="1">
    <location>
        <begin position="920"/>
        <end position="935"/>
    </location>
</feature>
<feature type="short sequence motif" description="Pol C" evidence="1">
    <location>
        <begin position="1111"/>
        <end position="1118"/>
    </location>
</feature>
<feature type="compositionally biased region" description="Low complexity" evidence="2">
    <location>
        <begin position="27"/>
        <end position="37"/>
    </location>
</feature>
<feature type="compositionally biased region" description="Polar residues" evidence="2">
    <location>
        <begin position="38"/>
        <end position="50"/>
    </location>
</feature>
<feature type="compositionally biased region" description="Basic residues" evidence="2">
    <location>
        <begin position="301"/>
        <end position="314"/>
    </location>
</feature>
<feature type="compositionally biased region" description="Acidic residues" evidence="2">
    <location>
        <begin position="506"/>
        <end position="518"/>
    </location>
</feature>
<feature type="active site" description="Exonuclease activity" evidence="1">
    <location>
        <position position="181"/>
    </location>
</feature>
<feature type="binding site" evidence="1">
    <location>
        <position position="289"/>
    </location>
    <ligand>
        <name>DNA</name>
        <dbReference type="ChEBI" id="CHEBI:16991"/>
        <label>template strand</label>
    </ligand>
</feature>
<feature type="binding site" evidence="1">
    <location>
        <position position="560"/>
    </location>
    <ligand>
        <name>RNA</name>
        <dbReference type="ChEBI" id="CHEBI:33697"/>
        <label>primer</label>
    </ligand>
</feature>
<feature type="binding site" evidence="1">
    <location>
        <position position="574"/>
    </location>
    <ligand>
        <name>DNA</name>
        <dbReference type="ChEBI" id="CHEBI:16991"/>
        <label>template strand</label>
    </ligand>
</feature>
<feature type="binding site" evidence="1">
    <location>
        <position position="731"/>
    </location>
    <ligand>
        <name>RNA</name>
        <dbReference type="ChEBI" id="CHEBI:33697"/>
        <label>primer</label>
    </ligand>
</feature>
<feature type="binding site" evidence="1">
    <location>
        <position position="740"/>
    </location>
    <ligand>
        <name>RNA</name>
        <dbReference type="ChEBI" id="CHEBI:33697"/>
        <label>primer</label>
    </ligand>
</feature>
<feature type="binding site" evidence="1">
    <location>
        <position position="745"/>
    </location>
    <ligand>
        <name>RNA</name>
        <dbReference type="ChEBI" id="CHEBI:33697"/>
        <label>primer</label>
    </ligand>
</feature>
<feature type="binding site" evidence="1">
    <location>
        <position position="783"/>
    </location>
    <ligand>
        <name>DNA</name>
        <dbReference type="ChEBI" id="CHEBI:16991"/>
        <label>template strand</label>
    </ligand>
</feature>
<feature type="binding site" evidence="1">
    <location>
        <position position="826"/>
    </location>
    <ligand>
        <name>DNA</name>
        <dbReference type="ChEBI" id="CHEBI:16991"/>
        <label>template strand</label>
    </ligand>
</feature>
<feature type="binding site" evidence="1">
    <location>
        <position position="840"/>
    </location>
    <ligand>
        <name>RNA</name>
        <dbReference type="ChEBI" id="CHEBI:33697"/>
        <label>primer</label>
    </ligand>
</feature>
<feature type="binding site" evidence="1">
    <location>
        <position position="846"/>
    </location>
    <ligand>
        <name>RNA</name>
        <dbReference type="ChEBI" id="CHEBI:33697"/>
        <label>primer</label>
    </ligand>
</feature>
<feature type="binding site" evidence="1">
    <location>
        <position position="867"/>
    </location>
    <ligand>
        <name>a 2'-deoxyribonucleoside 5'-triphosphate</name>
        <dbReference type="ChEBI" id="CHEBI:61560"/>
    </ligand>
</feature>
<feature type="binding site" evidence="1">
    <location>
        <position position="867"/>
    </location>
    <ligand>
        <name>Mg(2+)</name>
        <dbReference type="ChEBI" id="CHEBI:18420"/>
        <label>1</label>
        <note>catalytic</note>
    </ligand>
</feature>
<feature type="binding site" evidence="1">
    <location>
        <position position="867"/>
    </location>
    <ligand>
        <name>Mg(2+)</name>
        <dbReference type="ChEBI" id="CHEBI:18420"/>
        <label>2</label>
        <note>catalytic</note>
    </ligand>
</feature>
<feature type="binding site" evidence="1">
    <location>
        <position position="868"/>
    </location>
    <ligand>
        <name>a 2'-deoxyribonucleoside 5'-triphosphate</name>
        <dbReference type="ChEBI" id="CHEBI:61560"/>
    </ligand>
</feature>
<feature type="binding site" evidence="1">
    <location>
        <position position="868"/>
    </location>
    <ligand>
        <name>Mg(2+)</name>
        <dbReference type="ChEBI" id="CHEBI:18420"/>
        <label>2</label>
        <note>catalytic</note>
    </ligand>
</feature>
<feature type="binding site" evidence="1">
    <location>
        <position position="870"/>
    </location>
    <ligand>
        <name>a 2'-deoxyribonucleoside 5'-triphosphate</name>
        <dbReference type="ChEBI" id="CHEBI:61560"/>
    </ligand>
</feature>
<feature type="binding site" evidence="1">
    <location>
        <position position="872"/>
    </location>
    <ligand>
        <name>a 2'-deoxyribonucleoside 5'-triphosphate</name>
        <dbReference type="ChEBI" id="CHEBI:61560"/>
    </ligand>
</feature>
<feature type="binding site" evidence="1">
    <location>
        <position position="920"/>
    </location>
    <ligand>
        <name>a 2'-deoxyribonucleoside 5'-triphosphate</name>
        <dbReference type="ChEBI" id="CHEBI:61560"/>
    </ligand>
</feature>
<feature type="binding site" evidence="1">
    <location>
        <position position="924"/>
    </location>
    <ligand>
        <name>a 2'-deoxyribonucleoside 5'-triphosphate</name>
        <dbReference type="ChEBI" id="CHEBI:61560"/>
    </ligand>
</feature>
<feature type="binding site" evidence="1">
    <location>
        <position position="928"/>
    </location>
    <ligand>
        <name>a 2'-deoxyribonucleoside 5'-triphosphate</name>
        <dbReference type="ChEBI" id="CHEBI:61560"/>
    </ligand>
</feature>
<feature type="binding site" evidence="1">
    <location>
        <position position="1071"/>
    </location>
    <ligand>
        <name>DNA</name>
        <dbReference type="ChEBI" id="CHEBI:16991"/>
        <label>template strand</label>
    </ligand>
</feature>
<feature type="binding site" evidence="1">
    <location>
        <position position="1072"/>
    </location>
    <ligand>
        <name>DNA</name>
        <dbReference type="ChEBI" id="CHEBI:16991"/>
        <label>template strand</label>
    </ligand>
</feature>
<feature type="binding site" evidence="1">
    <location>
        <position position="1112"/>
    </location>
    <ligand>
        <name>a 2'-deoxyribonucleoside 5'-triphosphate</name>
        <dbReference type="ChEBI" id="CHEBI:61560"/>
    </ligand>
</feature>
<feature type="binding site" evidence="1">
    <location>
        <position position="1112"/>
    </location>
    <ligand>
        <name>Mg(2+)</name>
        <dbReference type="ChEBI" id="CHEBI:18420"/>
        <label>1</label>
        <note>catalytic</note>
    </ligand>
</feature>
<feature type="binding site" evidence="1">
    <location>
        <position position="1112"/>
    </location>
    <ligand>
        <name>Mg(2+)</name>
        <dbReference type="ChEBI" id="CHEBI:18420"/>
        <label>2</label>
        <note>catalytic</note>
    </ligand>
</feature>
<feature type="site" description="Critical for replication fidelity and mismatch recognition" evidence="1">
    <location>
        <position position="830"/>
    </location>
</feature>
<feature type="site" description="Critical for replication fidelity and mismatch recognition" evidence="1">
    <location>
        <position position="1079"/>
    </location>
</feature>
<feature type="sequence variant" description="In Novikoff hepatoma cells." evidence="3">
    <original>R</original>
    <variation>H</variation>
    <location>
        <position position="273"/>
    </location>
</feature>
<organism>
    <name type="scientific">Rattus norvegicus</name>
    <name type="common">Rat</name>
    <dbReference type="NCBI Taxonomy" id="10116"/>
    <lineage>
        <taxon>Eukaryota</taxon>
        <taxon>Metazoa</taxon>
        <taxon>Chordata</taxon>
        <taxon>Craniata</taxon>
        <taxon>Vertebrata</taxon>
        <taxon>Euteleostomi</taxon>
        <taxon>Mammalia</taxon>
        <taxon>Eutheria</taxon>
        <taxon>Euarchontoglires</taxon>
        <taxon>Glires</taxon>
        <taxon>Rodentia</taxon>
        <taxon>Myomorpha</taxon>
        <taxon>Muroidea</taxon>
        <taxon>Muridae</taxon>
        <taxon>Murinae</taxon>
        <taxon>Rattus</taxon>
    </lineage>
</organism>